<keyword id="KW-0067">ATP-binding</keyword>
<keyword id="KW-0963">Cytoplasm</keyword>
<keyword id="KW-0418">Kinase</keyword>
<keyword id="KW-0479">Metal-binding</keyword>
<keyword id="KW-0545">Nucleotide biosynthesis</keyword>
<keyword id="KW-0547">Nucleotide-binding</keyword>
<keyword id="KW-1185">Reference proteome</keyword>
<keyword id="KW-0808">Transferase</keyword>
<keyword id="KW-0862">Zinc</keyword>
<name>KAD_GLUDA</name>
<comment type="function">
    <text evidence="1">Catalyzes the reversible transfer of the terminal phosphate group between ATP and AMP. Plays an important role in cellular energy homeostasis and in adenine nucleotide metabolism.</text>
</comment>
<comment type="catalytic activity">
    <reaction evidence="1">
        <text>AMP + ATP = 2 ADP</text>
        <dbReference type="Rhea" id="RHEA:12973"/>
        <dbReference type="ChEBI" id="CHEBI:30616"/>
        <dbReference type="ChEBI" id="CHEBI:456215"/>
        <dbReference type="ChEBI" id="CHEBI:456216"/>
        <dbReference type="EC" id="2.7.4.3"/>
    </reaction>
</comment>
<comment type="pathway">
    <text evidence="1">Purine metabolism; AMP biosynthesis via salvage pathway; AMP from ADP: step 1/1.</text>
</comment>
<comment type="subunit">
    <text evidence="1">Monomer.</text>
</comment>
<comment type="subcellular location">
    <subcellularLocation>
        <location evidence="1">Cytoplasm</location>
    </subcellularLocation>
</comment>
<comment type="domain">
    <text evidence="1">Consists of three domains, a large central CORE domain and two small peripheral domains, NMPbind and LID, which undergo movements during catalysis. The LID domain closes over the site of phosphoryl transfer upon ATP binding. Assembling and dissambling the active center during each catalytic cycle provides an effective means to prevent ATP hydrolysis. Some bacteria have evolved a zinc-coordinating structure that stabilizes the LID domain.</text>
</comment>
<comment type="similarity">
    <text evidence="1">Belongs to the adenylate kinase family.</text>
</comment>
<accession>A9H3J9</accession>
<accession>B5ZIS7</accession>
<proteinExistence type="inferred from homology"/>
<protein>
    <recommendedName>
        <fullName evidence="1">Adenylate kinase</fullName>
        <shortName evidence="1">AK</shortName>
        <ecNumber evidence="1">2.7.4.3</ecNumber>
    </recommendedName>
    <alternativeName>
        <fullName evidence="1">ATP-AMP transphosphorylase</fullName>
    </alternativeName>
    <alternativeName>
        <fullName evidence="1">ATP:AMP phosphotransferase</fullName>
    </alternativeName>
    <alternativeName>
        <fullName evidence="1">Adenylate monophosphate kinase</fullName>
    </alternativeName>
</protein>
<sequence length="219" mass="23799">MNVIFLGPPGAGKGTQSKRLEARYGIAQISTGDMLRAEVAAESAIGKQARALMDAGQLVPDDVIVAMLESRIAQPDCAKGFILDGFPRTQGQAVALDSMLKRRGARIDVVLFLEVDEEALADRIAGRFTCATCGAGYNDLFKKPKVEGTCDVCGGHSFVRREDDRRETVAARLVAYRKQTAPILPYYEAEGLLRRIDGMADIDTVTAKVFEIMDAITKK</sequence>
<gene>
    <name evidence="1" type="primary">adk</name>
    <name type="ordered locus">GDI3383</name>
    <name type="ordered locus">Gdia_2987</name>
</gene>
<dbReference type="EC" id="2.7.4.3" evidence="1"/>
<dbReference type="EMBL" id="AM889285">
    <property type="protein sequence ID" value="CAP57326.1"/>
    <property type="molecule type" value="Genomic_DNA"/>
</dbReference>
<dbReference type="EMBL" id="CP001189">
    <property type="protein sequence ID" value="ACI52717.1"/>
    <property type="molecule type" value="Genomic_DNA"/>
</dbReference>
<dbReference type="RefSeq" id="WP_012227923.1">
    <property type="nucleotide sequence ID" value="NC_010125.1"/>
</dbReference>
<dbReference type="SMR" id="A9H3J9"/>
<dbReference type="STRING" id="272568.GDI3383"/>
<dbReference type="KEGG" id="gdi:GDI3383"/>
<dbReference type="KEGG" id="gdj:Gdia_2987"/>
<dbReference type="eggNOG" id="COG0563">
    <property type="taxonomic scope" value="Bacteria"/>
</dbReference>
<dbReference type="HOGENOM" id="CLU_032354_1_2_5"/>
<dbReference type="OrthoDB" id="9805030at2"/>
<dbReference type="UniPathway" id="UPA00588">
    <property type="reaction ID" value="UER00649"/>
</dbReference>
<dbReference type="Proteomes" id="UP000001176">
    <property type="component" value="Chromosome"/>
</dbReference>
<dbReference type="GO" id="GO:0005737">
    <property type="term" value="C:cytoplasm"/>
    <property type="evidence" value="ECO:0007669"/>
    <property type="project" value="UniProtKB-SubCell"/>
</dbReference>
<dbReference type="GO" id="GO:0004017">
    <property type="term" value="F:adenylate kinase activity"/>
    <property type="evidence" value="ECO:0007669"/>
    <property type="project" value="UniProtKB-UniRule"/>
</dbReference>
<dbReference type="GO" id="GO:0005524">
    <property type="term" value="F:ATP binding"/>
    <property type="evidence" value="ECO:0007669"/>
    <property type="project" value="UniProtKB-UniRule"/>
</dbReference>
<dbReference type="GO" id="GO:0008270">
    <property type="term" value="F:zinc ion binding"/>
    <property type="evidence" value="ECO:0007669"/>
    <property type="project" value="UniProtKB-UniRule"/>
</dbReference>
<dbReference type="GO" id="GO:0044209">
    <property type="term" value="P:AMP salvage"/>
    <property type="evidence" value="ECO:0007669"/>
    <property type="project" value="UniProtKB-UniRule"/>
</dbReference>
<dbReference type="CDD" id="cd01428">
    <property type="entry name" value="ADK"/>
    <property type="match status" value="1"/>
</dbReference>
<dbReference type="FunFam" id="3.40.50.300:FF:000106">
    <property type="entry name" value="Adenylate kinase mitochondrial"/>
    <property type="match status" value="1"/>
</dbReference>
<dbReference type="Gene3D" id="3.40.50.300">
    <property type="entry name" value="P-loop containing nucleotide triphosphate hydrolases"/>
    <property type="match status" value="1"/>
</dbReference>
<dbReference type="HAMAP" id="MF_00235">
    <property type="entry name" value="Adenylate_kinase_Adk"/>
    <property type="match status" value="1"/>
</dbReference>
<dbReference type="InterPro" id="IPR006259">
    <property type="entry name" value="Adenyl_kin_sub"/>
</dbReference>
<dbReference type="InterPro" id="IPR000850">
    <property type="entry name" value="Adenylat/UMP-CMP_kin"/>
</dbReference>
<dbReference type="InterPro" id="IPR033690">
    <property type="entry name" value="Adenylat_kinase_CS"/>
</dbReference>
<dbReference type="InterPro" id="IPR007862">
    <property type="entry name" value="Adenylate_kinase_lid-dom"/>
</dbReference>
<dbReference type="InterPro" id="IPR036193">
    <property type="entry name" value="ADK_active_lid_dom_sf"/>
</dbReference>
<dbReference type="InterPro" id="IPR027417">
    <property type="entry name" value="P-loop_NTPase"/>
</dbReference>
<dbReference type="NCBIfam" id="TIGR01351">
    <property type="entry name" value="adk"/>
    <property type="match status" value="1"/>
</dbReference>
<dbReference type="NCBIfam" id="NF001380">
    <property type="entry name" value="PRK00279.1-2"/>
    <property type="match status" value="1"/>
</dbReference>
<dbReference type="NCBIfam" id="NF001381">
    <property type="entry name" value="PRK00279.1-3"/>
    <property type="match status" value="1"/>
</dbReference>
<dbReference type="NCBIfam" id="NF011100">
    <property type="entry name" value="PRK14527.1"/>
    <property type="match status" value="1"/>
</dbReference>
<dbReference type="PANTHER" id="PTHR23359">
    <property type="entry name" value="NUCLEOTIDE KINASE"/>
    <property type="match status" value="1"/>
</dbReference>
<dbReference type="Pfam" id="PF00406">
    <property type="entry name" value="ADK"/>
    <property type="match status" value="1"/>
</dbReference>
<dbReference type="Pfam" id="PF05191">
    <property type="entry name" value="ADK_lid"/>
    <property type="match status" value="1"/>
</dbReference>
<dbReference type="PRINTS" id="PR00094">
    <property type="entry name" value="ADENYLTKNASE"/>
</dbReference>
<dbReference type="SUPFAM" id="SSF57774">
    <property type="entry name" value="Microbial and mitochondrial ADK, insert 'zinc finger' domain"/>
    <property type="match status" value="1"/>
</dbReference>
<dbReference type="SUPFAM" id="SSF52540">
    <property type="entry name" value="P-loop containing nucleoside triphosphate hydrolases"/>
    <property type="match status" value="1"/>
</dbReference>
<dbReference type="PROSITE" id="PS00113">
    <property type="entry name" value="ADENYLATE_KINASE"/>
    <property type="match status" value="1"/>
</dbReference>
<organism>
    <name type="scientific">Gluconacetobacter diazotrophicus (strain ATCC 49037 / DSM 5601 / CCUG 37298 / CIP 103539 / LMG 7603 / PAl5)</name>
    <dbReference type="NCBI Taxonomy" id="272568"/>
    <lineage>
        <taxon>Bacteria</taxon>
        <taxon>Pseudomonadati</taxon>
        <taxon>Pseudomonadota</taxon>
        <taxon>Alphaproteobacteria</taxon>
        <taxon>Acetobacterales</taxon>
        <taxon>Acetobacteraceae</taxon>
        <taxon>Gluconacetobacter</taxon>
    </lineage>
</organism>
<feature type="chain" id="PRO_1000078277" description="Adenylate kinase">
    <location>
        <begin position="1"/>
        <end position="219"/>
    </location>
</feature>
<feature type="region of interest" description="NMP" evidence="1">
    <location>
        <begin position="30"/>
        <end position="59"/>
    </location>
</feature>
<feature type="region of interest" description="LID" evidence="1">
    <location>
        <begin position="126"/>
        <end position="164"/>
    </location>
</feature>
<feature type="binding site" evidence="1">
    <location>
        <begin position="10"/>
        <end position="15"/>
    </location>
    <ligand>
        <name>ATP</name>
        <dbReference type="ChEBI" id="CHEBI:30616"/>
    </ligand>
</feature>
<feature type="binding site" evidence="1">
    <location>
        <position position="31"/>
    </location>
    <ligand>
        <name>AMP</name>
        <dbReference type="ChEBI" id="CHEBI:456215"/>
    </ligand>
</feature>
<feature type="binding site" evidence="1">
    <location>
        <position position="36"/>
    </location>
    <ligand>
        <name>AMP</name>
        <dbReference type="ChEBI" id="CHEBI:456215"/>
    </ligand>
</feature>
<feature type="binding site" evidence="1">
    <location>
        <begin position="57"/>
        <end position="59"/>
    </location>
    <ligand>
        <name>AMP</name>
        <dbReference type="ChEBI" id="CHEBI:456215"/>
    </ligand>
</feature>
<feature type="binding site" evidence="1">
    <location>
        <begin position="85"/>
        <end position="88"/>
    </location>
    <ligand>
        <name>AMP</name>
        <dbReference type="ChEBI" id="CHEBI:456215"/>
    </ligand>
</feature>
<feature type="binding site" evidence="1">
    <location>
        <position position="92"/>
    </location>
    <ligand>
        <name>AMP</name>
        <dbReference type="ChEBI" id="CHEBI:456215"/>
    </ligand>
</feature>
<feature type="binding site" evidence="1">
    <location>
        <position position="127"/>
    </location>
    <ligand>
        <name>ATP</name>
        <dbReference type="ChEBI" id="CHEBI:30616"/>
    </ligand>
</feature>
<feature type="binding site" evidence="1">
    <location>
        <position position="130"/>
    </location>
    <ligand>
        <name>Zn(2+)</name>
        <dbReference type="ChEBI" id="CHEBI:29105"/>
        <note>structural</note>
    </ligand>
</feature>
<feature type="binding site" evidence="1">
    <location>
        <position position="133"/>
    </location>
    <ligand>
        <name>Zn(2+)</name>
        <dbReference type="ChEBI" id="CHEBI:29105"/>
        <note>structural</note>
    </ligand>
</feature>
<feature type="binding site" evidence="1">
    <location>
        <position position="150"/>
    </location>
    <ligand>
        <name>Zn(2+)</name>
        <dbReference type="ChEBI" id="CHEBI:29105"/>
        <note>structural</note>
    </ligand>
</feature>
<feature type="binding site" evidence="1">
    <location>
        <position position="153"/>
    </location>
    <ligand>
        <name>Zn(2+)</name>
        <dbReference type="ChEBI" id="CHEBI:29105"/>
        <note>structural</note>
    </ligand>
</feature>
<feature type="binding site" evidence="1">
    <location>
        <position position="161"/>
    </location>
    <ligand>
        <name>AMP</name>
        <dbReference type="ChEBI" id="CHEBI:456215"/>
    </ligand>
</feature>
<feature type="binding site" evidence="1">
    <location>
        <position position="172"/>
    </location>
    <ligand>
        <name>AMP</name>
        <dbReference type="ChEBI" id="CHEBI:456215"/>
    </ligand>
</feature>
<feature type="binding site" evidence="1">
    <location>
        <position position="200"/>
    </location>
    <ligand>
        <name>ATP</name>
        <dbReference type="ChEBI" id="CHEBI:30616"/>
    </ligand>
</feature>
<reference key="1">
    <citation type="journal article" date="2009" name="BMC Genomics">
        <title>Complete genome sequence of the sugarcane nitrogen-fixing endophyte Gluconacetobacter diazotrophicus Pal5.</title>
        <authorList>
            <person name="Bertalan M."/>
            <person name="Albano R."/>
            <person name="de Padua V."/>
            <person name="Rouws L."/>
            <person name="Rojas C."/>
            <person name="Hemerly A."/>
            <person name="Teixeira K."/>
            <person name="Schwab S."/>
            <person name="Araujo J."/>
            <person name="Oliveira A."/>
            <person name="Franca L."/>
            <person name="Magalhaes V."/>
            <person name="Alqueres S."/>
            <person name="Cardoso A."/>
            <person name="Almeida W."/>
            <person name="Loureiro M.M."/>
            <person name="Nogueira E."/>
            <person name="Cidade D."/>
            <person name="Oliveira D."/>
            <person name="Simao T."/>
            <person name="Macedo J."/>
            <person name="Valadao A."/>
            <person name="Dreschsel M."/>
            <person name="Freitas F."/>
            <person name="Vidal M."/>
            <person name="Guedes H."/>
            <person name="Rodrigues E."/>
            <person name="Meneses C."/>
            <person name="Brioso P."/>
            <person name="Pozzer L."/>
            <person name="Figueiredo D."/>
            <person name="Montano H."/>
            <person name="Junior J."/>
            <person name="de Souza Filho G."/>
            <person name="Martin Quintana Flores V."/>
            <person name="Ferreira B."/>
            <person name="Branco A."/>
            <person name="Gonzalez P."/>
            <person name="Guillobel H."/>
            <person name="Lemos M."/>
            <person name="Seibel L."/>
            <person name="Macedo J."/>
            <person name="Alves-Ferreira M."/>
            <person name="Sachetto-Martins G."/>
            <person name="Coelho A."/>
            <person name="Santos E."/>
            <person name="Amaral G."/>
            <person name="Neves A."/>
            <person name="Pacheco A.B."/>
            <person name="Carvalho D."/>
            <person name="Lery L."/>
            <person name="Bisch P."/>
            <person name="Rossle S.C."/>
            <person name="Urmenyi T."/>
            <person name="Rael Pereira A."/>
            <person name="Silva R."/>
            <person name="Rondinelli E."/>
            <person name="von Kruger W."/>
            <person name="Martins O."/>
            <person name="Baldani J.I."/>
            <person name="Ferreira P.C."/>
        </authorList>
    </citation>
    <scope>NUCLEOTIDE SEQUENCE [LARGE SCALE GENOMIC DNA]</scope>
    <source>
        <strain>ATCC 49037 / DSM 5601 / CCUG 37298 / CIP 103539 / LMG 7603 / PAl5</strain>
    </source>
</reference>
<reference key="2">
    <citation type="journal article" date="2010" name="Stand. Genomic Sci.">
        <title>Two genome sequences of the same bacterial strain, Gluconacetobacter diazotrophicus PAl 5, suggest a new standard in genome sequence submission.</title>
        <authorList>
            <person name="Giongo A."/>
            <person name="Tyler H.L."/>
            <person name="Zipperer U.N."/>
            <person name="Triplett E.W."/>
        </authorList>
    </citation>
    <scope>NUCLEOTIDE SEQUENCE [LARGE SCALE GENOMIC DNA]</scope>
    <source>
        <strain>ATCC 49037 / DSM 5601 / CCUG 37298 / CIP 103539 / LMG 7603 / PAl5</strain>
    </source>
</reference>
<evidence type="ECO:0000255" key="1">
    <source>
        <dbReference type="HAMAP-Rule" id="MF_00235"/>
    </source>
</evidence>